<gene>
    <name evidence="1" type="primary">pheS</name>
    <name type="ordered locus">BR2122</name>
    <name type="ordered locus">BS1330_I2116</name>
</gene>
<organism>
    <name type="scientific">Brucella suis biovar 1 (strain 1330)</name>
    <dbReference type="NCBI Taxonomy" id="204722"/>
    <lineage>
        <taxon>Bacteria</taxon>
        <taxon>Pseudomonadati</taxon>
        <taxon>Pseudomonadota</taxon>
        <taxon>Alphaproteobacteria</taxon>
        <taxon>Hyphomicrobiales</taxon>
        <taxon>Brucellaceae</taxon>
        <taxon>Brucella/Ochrobactrum group</taxon>
        <taxon>Brucella</taxon>
    </lineage>
</organism>
<accession>Q8FXX5</accession>
<accession>G0K970</accession>
<reference key="1">
    <citation type="journal article" date="2002" name="Proc. Natl. Acad. Sci. U.S.A.">
        <title>The Brucella suis genome reveals fundamental similarities between animal and plant pathogens and symbionts.</title>
        <authorList>
            <person name="Paulsen I.T."/>
            <person name="Seshadri R."/>
            <person name="Nelson K.E."/>
            <person name="Eisen J.A."/>
            <person name="Heidelberg J.F."/>
            <person name="Read T.D."/>
            <person name="Dodson R.J."/>
            <person name="Umayam L.A."/>
            <person name="Brinkac L.M."/>
            <person name="Beanan M.J."/>
            <person name="Daugherty S.C."/>
            <person name="DeBoy R.T."/>
            <person name="Durkin A.S."/>
            <person name="Kolonay J.F."/>
            <person name="Madupu R."/>
            <person name="Nelson W.C."/>
            <person name="Ayodeji B."/>
            <person name="Kraul M."/>
            <person name="Shetty J."/>
            <person name="Malek J.A."/>
            <person name="Van Aken S.E."/>
            <person name="Riedmuller S."/>
            <person name="Tettelin H."/>
            <person name="Gill S.R."/>
            <person name="White O."/>
            <person name="Salzberg S.L."/>
            <person name="Hoover D.L."/>
            <person name="Lindler L.E."/>
            <person name="Halling S.M."/>
            <person name="Boyle S.M."/>
            <person name="Fraser C.M."/>
        </authorList>
    </citation>
    <scope>NUCLEOTIDE SEQUENCE [LARGE SCALE GENOMIC DNA]</scope>
    <source>
        <strain>1330</strain>
    </source>
</reference>
<reference key="2">
    <citation type="journal article" date="2011" name="J. Bacteriol.">
        <title>Revised genome sequence of Brucella suis 1330.</title>
        <authorList>
            <person name="Tae H."/>
            <person name="Shallom S."/>
            <person name="Settlage R."/>
            <person name="Preston D."/>
            <person name="Adams L.G."/>
            <person name="Garner H.R."/>
        </authorList>
    </citation>
    <scope>NUCLEOTIDE SEQUENCE [LARGE SCALE GENOMIC DNA]</scope>
    <source>
        <strain>1330</strain>
    </source>
</reference>
<keyword id="KW-0030">Aminoacyl-tRNA synthetase</keyword>
<keyword id="KW-0067">ATP-binding</keyword>
<keyword id="KW-0963">Cytoplasm</keyword>
<keyword id="KW-0436">Ligase</keyword>
<keyword id="KW-0460">Magnesium</keyword>
<keyword id="KW-0479">Metal-binding</keyword>
<keyword id="KW-0547">Nucleotide-binding</keyword>
<keyword id="KW-0648">Protein biosynthesis</keyword>
<proteinExistence type="inferred from homology"/>
<feature type="chain" id="PRO_0000126675" description="Phenylalanine--tRNA ligase alpha subunit">
    <location>
        <begin position="1"/>
        <end position="369"/>
    </location>
</feature>
<feature type="binding site" evidence="1">
    <location>
        <position position="269"/>
    </location>
    <ligand>
        <name>Mg(2+)</name>
        <dbReference type="ChEBI" id="CHEBI:18420"/>
        <note>shared with beta subunit</note>
    </ligand>
</feature>
<sequence>MSDLEQLERQILEDIAAAVDEQGIEAVRVAALGKKGTVSEKLKTLGGMSPEERQMQGPAINGLKNRVTEALSERRTELRKAAVAARLEREKVDVTLPVRESAASRGRIHPISQVIDEITAIFADMGFSIAEGPDIETDYYNFTALNFPEGHPAREMHDTFFFNPDEKGERKLLRTHTSPVQVHTMEKFAAMRDKEGRDEPIRIVIPGKTYRMDSDATHSPMFHQVEGLVVDKSANVANMKWVLEEFCKAFFEVPSVKMRMRPSFFPFTEPSVEVDIQCDRSGPHVKFGEGNDWLEILGCGMVHPNVLRMSGYDPEVYQGFAWGMGIDRIAMLKYGMPDLRAFFDADVRWIEHYGFRPLDIPTLFGGLSA</sequence>
<comment type="catalytic activity">
    <reaction evidence="1">
        <text>tRNA(Phe) + L-phenylalanine + ATP = L-phenylalanyl-tRNA(Phe) + AMP + diphosphate + H(+)</text>
        <dbReference type="Rhea" id="RHEA:19413"/>
        <dbReference type="Rhea" id="RHEA-COMP:9668"/>
        <dbReference type="Rhea" id="RHEA-COMP:9699"/>
        <dbReference type="ChEBI" id="CHEBI:15378"/>
        <dbReference type="ChEBI" id="CHEBI:30616"/>
        <dbReference type="ChEBI" id="CHEBI:33019"/>
        <dbReference type="ChEBI" id="CHEBI:58095"/>
        <dbReference type="ChEBI" id="CHEBI:78442"/>
        <dbReference type="ChEBI" id="CHEBI:78531"/>
        <dbReference type="ChEBI" id="CHEBI:456215"/>
        <dbReference type="EC" id="6.1.1.20"/>
    </reaction>
</comment>
<comment type="cofactor">
    <cofactor evidence="1">
        <name>Mg(2+)</name>
        <dbReference type="ChEBI" id="CHEBI:18420"/>
    </cofactor>
    <text evidence="1">Binds 2 magnesium ions per tetramer.</text>
</comment>
<comment type="subunit">
    <text evidence="1">Tetramer of two alpha and two beta subunits.</text>
</comment>
<comment type="subcellular location">
    <subcellularLocation>
        <location evidence="1">Cytoplasm</location>
    </subcellularLocation>
</comment>
<comment type="similarity">
    <text evidence="1">Belongs to the class-II aminoacyl-tRNA synthetase family. Phe-tRNA synthetase alpha subunit type 1 subfamily.</text>
</comment>
<protein>
    <recommendedName>
        <fullName evidence="1">Phenylalanine--tRNA ligase alpha subunit</fullName>
        <ecNumber evidence="1">6.1.1.20</ecNumber>
    </recommendedName>
    <alternativeName>
        <fullName evidence="1">Phenylalanyl-tRNA synthetase alpha subunit</fullName>
        <shortName evidence="1">PheRS</shortName>
    </alternativeName>
</protein>
<name>SYFA_BRUSU</name>
<dbReference type="EC" id="6.1.1.20" evidence="1"/>
<dbReference type="EMBL" id="AE014291">
    <property type="protein sequence ID" value="AAN31012.1"/>
    <property type="molecule type" value="Genomic_DNA"/>
</dbReference>
<dbReference type="EMBL" id="CP002997">
    <property type="protein sequence ID" value="AEM19429.1"/>
    <property type="molecule type" value="Genomic_DNA"/>
</dbReference>
<dbReference type="RefSeq" id="WP_002967041.1">
    <property type="nucleotide sequence ID" value="NZ_KN046804.1"/>
</dbReference>
<dbReference type="SMR" id="Q8FXX5"/>
<dbReference type="GeneID" id="97534620"/>
<dbReference type="KEGG" id="bms:BR2122"/>
<dbReference type="KEGG" id="bsi:BS1330_I2116"/>
<dbReference type="PATRIC" id="fig|204722.22.peg.1894"/>
<dbReference type="HOGENOM" id="CLU_025086_0_1_5"/>
<dbReference type="PhylomeDB" id="Q8FXX5"/>
<dbReference type="Proteomes" id="UP000007104">
    <property type="component" value="Chromosome I"/>
</dbReference>
<dbReference type="GO" id="GO:0005737">
    <property type="term" value="C:cytoplasm"/>
    <property type="evidence" value="ECO:0007669"/>
    <property type="project" value="UniProtKB-SubCell"/>
</dbReference>
<dbReference type="GO" id="GO:0005524">
    <property type="term" value="F:ATP binding"/>
    <property type="evidence" value="ECO:0007669"/>
    <property type="project" value="UniProtKB-UniRule"/>
</dbReference>
<dbReference type="GO" id="GO:0000287">
    <property type="term" value="F:magnesium ion binding"/>
    <property type="evidence" value="ECO:0007669"/>
    <property type="project" value="UniProtKB-UniRule"/>
</dbReference>
<dbReference type="GO" id="GO:0004826">
    <property type="term" value="F:phenylalanine-tRNA ligase activity"/>
    <property type="evidence" value="ECO:0007669"/>
    <property type="project" value="UniProtKB-UniRule"/>
</dbReference>
<dbReference type="GO" id="GO:0000049">
    <property type="term" value="F:tRNA binding"/>
    <property type="evidence" value="ECO:0007669"/>
    <property type="project" value="InterPro"/>
</dbReference>
<dbReference type="GO" id="GO:0006432">
    <property type="term" value="P:phenylalanyl-tRNA aminoacylation"/>
    <property type="evidence" value="ECO:0007669"/>
    <property type="project" value="UniProtKB-UniRule"/>
</dbReference>
<dbReference type="CDD" id="cd00496">
    <property type="entry name" value="PheRS_alpha_core"/>
    <property type="match status" value="1"/>
</dbReference>
<dbReference type="FunFam" id="3.30.930.10:FF:000003">
    <property type="entry name" value="Phenylalanine--tRNA ligase alpha subunit"/>
    <property type="match status" value="1"/>
</dbReference>
<dbReference type="Gene3D" id="3.30.930.10">
    <property type="entry name" value="Bira Bifunctional Protein, Domain 2"/>
    <property type="match status" value="1"/>
</dbReference>
<dbReference type="HAMAP" id="MF_00281">
    <property type="entry name" value="Phe_tRNA_synth_alpha1"/>
    <property type="match status" value="1"/>
</dbReference>
<dbReference type="InterPro" id="IPR006195">
    <property type="entry name" value="aa-tRNA-synth_II"/>
</dbReference>
<dbReference type="InterPro" id="IPR045864">
    <property type="entry name" value="aa-tRNA-synth_II/BPL/LPL"/>
</dbReference>
<dbReference type="InterPro" id="IPR004529">
    <property type="entry name" value="Phe-tRNA-synth_IIc_asu"/>
</dbReference>
<dbReference type="InterPro" id="IPR004188">
    <property type="entry name" value="Phe-tRNA_ligase_II_N"/>
</dbReference>
<dbReference type="InterPro" id="IPR022911">
    <property type="entry name" value="Phe_tRNA_ligase_alpha1_bac"/>
</dbReference>
<dbReference type="InterPro" id="IPR002319">
    <property type="entry name" value="Phenylalanyl-tRNA_Synthase"/>
</dbReference>
<dbReference type="InterPro" id="IPR010978">
    <property type="entry name" value="tRNA-bd_arm"/>
</dbReference>
<dbReference type="NCBIfam" id="TIGR00468">
    <property type="entry name" value="pheS"/>
    <property type="match status" value="1"/>
</dbReference>
<dbReference type="PANTHER" id="PTHR11538:SF41">
    <property type="entry name" value="PHENYLALANINE--TRNA LIGASE, MITOCHONDRIAL"/>
    <property type="match status" value="1"/>
</dbReference>
<dbReference type="PANTHER" id="PTHR11538">
    <property type="entry name" value="PHENYLALANYL-TRNA SYNTHETASE"/>
    <property type="match status" value="1"/>
</dbReference>
<dbReference type="Pfam" id="PF02912">
    <property type="entry name" value="Phe_tRNA-synt_N"/>
    <property type="match status" value="1"/>
</dbReference>
<dbReference type="Pfam" id="PF01409">
    <property type="entry name" value="tRNA-synt_2d"/>
    <property type="match status" value="1"/>
</dbReference>
<dbReference type="SUPFAM" id="SSF55681">
    <property type="entry name" value="Class II aaRS and biotin synthetases"/>
    <property type="match status" value="1"/>
</dbReference>
<dbReference type="SUPFAM" id="SSF46589">
    <property type="entry name" value="tRNA-binding arm"/>
    <property type="match status" value="1"/>
</dbReference>
<dbReference type="PROSITE" id="PS50862">
    <property type="entry name" value="AA_TRNA_LIGASE_II"/>
    <property type="match status" value="1"/>
</dbReference>
<evidence type="ECO:0000255" key="1">
    <source>
        <dbReference type="HAMAP-Rule" id="MF_00281"/>
    </source>
</evidence>